<protein>
    <recommendedName>
        <fullName>Leucine-rich repeat-containing protein 4B</fullName>
    </recommendedName>
    <alternativeName>
        <fullName>Netrin-G3 ligand</fullName>
        <shortName>NGL-3</shortName>
    </alternativeName>
</protein>
<reference key="1">
    <citation type="journal article" date="2004" name="Genome Res.">
        <title>The status, quality, and expansion of the NIH full-length cDNA project: the Mammalian Gene Collection (MGC).</title>
        <authorList>
            <consortium name="The MGC Project Team"/>
        </authorList>
    </citation>
    <scope>NUCLEOTIDE SEQUENCE [LARGE SCALE MRNA]</scope>
    <source>
        <strain>C57BL/6J</strain>
        <tissue>Embryonic brain</tissue>
    </source>
</reference>
<reference key="2">
    <citation type="journal article" date="2005" name="Science">
        <title>The transcriptional landscape of the mammalian genome.</title>
        <authorList>
            <person name="Carninci P."/>
            <person name="Kasukawa T."/>
            <person name="Katayama S."/>
            <person name="Gough J."/>
            <person name="Frith M.C."/>
            <person name="Maeda N."/>
            <person name="Oyama R."/>
            <person name="Ravasi T."/>
            <person name="Lenhard B."/>
            <person name="Wells C."/>
            <person name="Kodzius R."/>
            <person name="Shimokawa K."/>
            <person name="Bajic V.B."/>
            <person name="Brenner S.E."/>
            <person name="Batalov S."/>
            <person name="Forrest A.R."/>
            <person name="Zavolan M."/>
            <person name="Davis M.J."/>
            <person name="Wilming L.G."/>
            <person name="Aidinis V."/>
            <person name="Allen J.E."/>
            <person name="Ambesi-Impiombato A."/>
            <person name="Apweiler R."/>
            <person name="Aturaliya R.N."/>
            <person name="Bailey T.L."/>
            <person name="Bansal M."/>
            <person name="Baxter L."/>
            <person name="Beisel K.W."/>
            <person name="Bersano T."/>
            <person name="Bono H."/>
            <person name="Chalk A.M."/>
            <person name="Chiu K.P."/>
            <person name="Choudhary V."/>
            <person name="Christoffels A."/>
            <person name="Clutterbuck D.R."/>
            <person name="Crowe M.L."/>
            <person name="Dalla E."/>
            <person name="Dalrymple B.P."/>
            <person name="de Bono B."/>
            <person name="Della Gatta G."/>
            <person name="di Bernardo D."/>
            <person name="Down T."/>
            <person name="Engstrom P."/>
            <person name="Fagiolini M."/>
            <person name="Faulkner G."/>
            <person name="Fletcher C.F."/>
            <person name="Fukushima T."/>
            <person name="Furuno M."/>
            <person name="Futaki S."/>
            <person name="Gariboldi M."/>
            <person name="Georgii-Hemming P."/>
            <person name="Gingeras T.R."/>
            <person name="Gojobori T."/>
            <person name="Green R.E."/>
            <person name="Gustincich S."/>
            <person name="Harbers M."/>
            <person name="Hayashi Y."/>
            <person name="Hensch T.K."/>
            <person name="Hirokawa N."/>
            <person name="Hill D."/>
            <person name="Huminiecki L."/>
            <person name="Iacono M."/>
            <person name="Ikeo K."/>
            <person name="Iwama A."/>
            <person name="Ishikawa T."/>
            <person name="Jakt M."/>
            <person name="Kanapin A."/>
            <person name="Katoh M."/>
            <person name="Kawasawa Y."/>
            <person name="Kelso J."/>
            <person name="Kitamura H."/>
            <person name="Kitano H."/>
            <person name="Kollias G."/>
            <person name="Krishnan S.P."/>
            <person name="Kruger A."/>
            <person name="Kummerfeld S.K."/>
            <person name="Kurochkin I.V."/>
            <person name="Lareau L.F."/>
            <person name="Lazarevic D."/>
            <person name="Lipovich L."/>
            <person name="Liu J."/>
            <person name="Liuni S."/>
            <person name="McWilliam S."/>
            <person name="Madan Babu M."/>
            <person name="Madera M."/>
            <person name="Marchionni L."/>
            <person name="Matsuda H."/>
            <person name="Matsuzawa S."/>
            <person name="Miki H."/>
            <person name="Mignone F."/>
            <person name="Miyake S."/>
            <person name="Morris K."/>
            <person name="Mottagui-Tabar S."/>
            <person name="Mulder N."/>
            <person name="Nakano N."/>
            <person name="Nakauchi H."/>
            <person name="Ng P."/>
            <person name="Nilsson R."/>
            <person name="Nishiguchi S."/>
            <person name="Nishikawa S."/>
            <person name="Nori F."/>
            <person name="Ohara O."/>
            <person name="Okazaki Y."/>
            <person name="Orlando V."/>
            <person name="Pang K.C."/>
            <person name="Pavan W.J."/>
            <person name="Pavesi G."/>
            <person name="Pesole G."/>
            <person name="Petrovsky N."/>
            <person name="Piazza S."/>
            <person name="Reed J."/>
            <person name="Reid J.F."/>
            <person name="Ring B.Z."/>
            <person name="Ringwald M."/>
            <person name="Rost B."/>
            <person name="Ruan Y."/>
            <person name="Salzberg S.L."/>
            <person name="Sandelin A."/>
            <person name="Schneider C."/>
            <person name="Schoenbach C."/>
            <person name="Sekiguchi K."/>
            <person name="Semple C.A."/>
            <person name="Seno S."/>
            <person name="Sessa L."/>
            <person name="Sheng Y."/>
            <person name="Shibata Y."/>
            <person name="Shimada H."/>
            <person name="Shimada K."/>
            <person name="Silva D."/>
            <person name="Sinclair B."/>
            <person name="Sperling S."/>
            <person name="Stupka E."/>
            <person name="Sugiura K."/>
            <person name="Sultana R."/>
            <person name="Takenaka Y."/>
            <person name="Taki K."/>
            <person name="Tammoja K."/>
            <person name="Tan S.L."/>
            <person name="Tang S."/>
            <person name="Taylor M.S."/>
            <person name="Tegner J."/>
            <person name="Teichmann S.A."/>
            <person name="Ueda H.R."/>
            <person name="van Nimwegen E."/>
            <person name="Verardo R."/>
            <person name="Wei C.L."/>
            <person name="Yagi K."/>
            <person name="Yamanishi H."/>
            <person name="Zabarovsky E."/>
            <person name="Zhu S."/>
            <person name="Zimmer A."/>
            <person name="Hide W."/>
            <person name="Bult C."/>
            <person name="Grimmond S.M."/>
            <person name="Teasdale R.D."/>
            <person name="Liu E.T."/>
            <person name="Brusic V."/>
            <person name="Quackenbush J."/>
            <person name="Wahlestedt C."/>
            <person name="Mattick J.S."/>
            <person name="Hume D.A."/>
            <person name="Kai C."/>
            <person name="Sasaki D."/>
            <person name="Tomaru Y."/>
            <person name="Fukuda S."/>
            <person name="Kanamori-Katayama M."/>
            <person name="Suzuki M."/>
            <person name="Aoki J."/>
            <person name="Arakawa T."/>
            <person name="Iida J."/>
            <person name="Imamura K."/>
            <person name="Itoh M."/>
            <person name="Kato T."/>
            <person name="Kawaji H."/>
            <person name="Kawagashira N."/>
            <person name="Kawashima T."/>
            <person name="Kojima M."/>
            <person name="Kondo S."/>
            <person name="Konno H."/>
            <person name="Nakano K."/>
            <person name="Ninomiya N."/>
            <person name="Nishio T."/>
            <person name="Okada M."/>
            <person name="Plessy C."/>
            <person name="Shibata K."/>
            <person name="Shiraki T."/>
            <person name="Suzuki S."/>
            <person name="Tagami M."/>
            <person name="Waki K."/>
            <person name="Watahiki A."/>
            <person name="Okamura-Oho Y."/>
            <person name="Suzuki H."/>
            <person name="Kawai J."/>
            <person name="Hayashizaki Y."/>
        </authorList>
    </citation>
    <scope>NUCLEOTIDE SEQUENCE [LARGE SCALE MRNA] OF 63-709</scope>
    <source>
        <strain>C57BL/6J</strain>
        <tissue>Medulla oblongata</tissue>
    </source>
</reference>
<reference key="3">
    <citation type="journal article" date="2006" name="Nat. Neurosci.">
        <title>NGL family PSD-95-interacting adhesion molecules regulate excitatory synapse formation.</title>
        <authorList>
            <person name="Kim S."/>
            <person name="Burette A."/>
            <person name="Chung H.S."/>
            <person name="Kwon S.-K."/>
            <person name="Woo J."/>
            <person name="Lee H.W."/>
            <person name="Kim K."/>
            <person name="Kim H."/>
            <person name="Weinberg R.J."/>
            <person name="Kim E."/>
        </authorList>
    </citation>
    <scope>INTERACTION WITH DLG4</scope>
</reference>
<reference key="4">
    <citation type="journal article" date="2010" name="Cell">
        <title>A tissue-specific atlas of mouse protein phosphorylation and expression.</title>
        <authorList>
            <person name="Huttlin E.L."/>
            <person name="Jedrychowski M.P."/>
            <person name="Elias J.E."/>
            <person name="Goswami T."/>
            <person name="Rad R."/>
            <person name="Beausoleil S.A."/>
            <person name="Villen J."/>
            <person name="Haas W."/>
            <person name="Sowa M.E."/>
            <person name="Gygi S.P."/>
        </authorList>
    </citation>
    <scope>PHOSPHORYLATION [LARGE SCALE ANALYSIS] AT SER-689</scope>
    <scope>IDENTIFICATION BY MASS SPECTROMETRY [LARGE SCALE ANALYSIS]</scope>
    <source>
        <tissue>Brain</tissue>
        <tissue>Brown adipose tissue</tissue>
        <tissue>Heart</tissue>
        <tissue>Lung</tissue>
    </source>
</reference>
<keyword id="KW-0002">3D-structure</keyword>
<keyword id="KW-1003">Cell membrane</keyword>
<keyword id="KW-0966">Cell projection</keyword>
<keyword id="KW-1015">Disulfide bond</keyword>
<keyword id="KW-0325">Glycoprotein</keyword>
<keyword id="KW-0393">Immunoglobulin domain</keyword>
<keyword id="KW-0433">Leucine-rich repeat</keyword>
<keyword id="KW-0472">Membrane</keyword>
<keyword id="KW-0597">Phosphoprotein</keyword>
<keyword id="KW-1185">Reference proteome</keyword>
<keyword id="KW-0677">Repeat</keyword>
<keyword id="KW-0732">Signal</keyword>
<keyword id="KW-0770">Synapse</keyword>
<keyword id="KW-0812">Transmembrane</keyword>
<keyword id="KW-1133">Transmembrane helix</keyword>
<feature type="signal peptide" evidence="2">
    <location>
        <begin position="1"/>
        <end position="38"/>
    </location>
</feature>
<feature type="chain" id="PRO_0000232387" description="Leucine-rich repeat-containing protein 4B">
    <location>
        <begin position="39"/>
        <end position="709"/>
    </location>
</feature>
<feature type="transmembrane region" description="Helical" evidence="2">
    <location>
        <begin position="575"/>
        <end position="595"/>
    </location>
</feature>
<feature type="domain" description="LRRNT">
    <location>
        <begin position="50"/>
        <end position="88"/>
    </location>
</feature>
<feature type="repeat" description="LRR 1">
    <location>
        <begin position="89"/>
        <end position="110"/>
    </location>
</feature>
<feature type="repeat" description="LRR 2">
    <location>
        <begin position="113"/>
        <end position="134"/>
    </location>
</feature>
<feature type="repeat" description="LRR 3">
    <location>
        <begin position="137"/>
        <end position="158"/>
    </location>
</feature>
<feature type="repeat" description="LRR 4">
    <location>
        <begin position="161"/>
        <end position="182"/>
    </location>
</feature>
<feature type="repeat" description="LRR 5">
    <location>
        <begin position="185"/>
        <end position="207"/>
    </location>
</feature>
<feature type="repeat" description="LRR 6">
    <location>
        <begin position="210"/>
        <end position="231"/>
    </location>
</feature>
<feature type="repeat" description="LRR 7">
    <location>
        <begin position="232"/>
        <end position="253"/>
    </location>
</feature>
<feature type="repeat" description="LRR 8">
    <location>
        <begin position="256"/>
        <end position="277"/>
    </location>
</feature>
<feature type="repeat" description="LRR 9">
    <location>
        <begin position="280"/>
        <end position="301"/>
    </location>
</feature>
<feature type="domain" description="LRRCT">
    <location>
        <begin position="313"/>
        <end position="365"/>
    </location>
</feature>
<feature type="domain" description="Ig-like C2-type">
    <location>
        <begin position="366"/>
        <end position="454"/>
    </location>
</feature>
<feature type="region of interest" description="Disordered" evidence="4">
    <location>
        <begin position="496"/>
        <end position="552"/>
    </location>
</feature>
<feature type="compositionally biased region" description="Low complexity" evidence="4">
    <location>
        <begin position="528"/>
        <end position="544"/>
    </location>
</feature>
<feature type="modified residue" description="Phosphoserine" evidence="7">
    <location>
        <position position="689"/>
    </location>
</feature>
<feature type="glycosylation site" description="N-linked (GlcNAc...) asparagine" evidence="2">
    <location>
        <position position="226"/>
    </location>
</feature>
<feature type="glycosylation site" description="N-linked (GlcNAc...) asparagine" evidence="2">
    <location>
        <position position="285"/>
    </location>
</feature>
<feature type="glycosylation site" description="N-linked (GlcNAc...) asparagine" evidence="2">
    <location>
        <position position="335"/>
    </location>
</feature>
<feature type="glycosylation site" description="N-linked (GlcNAc...) asparagine" evidence="2">
    <location>
        <position position="376"/>
    </location>
</feature>
<feature type="glycosylation site" description="N-linked (GlcNAc...) asparagine" evidence="2">
    <location>
        <position position="402"/>
    </location>
</feature>
<feature type="glycosylation site" description="N-linked (GlcNAc...) asparagine" evidence="2">
    <location>
        <position position="424"/>
    </location>
</feature>
<feature type="glycosylation site" description="N-linked (GlcNAc...) asparagine" evidence="2">
    <location>
        <position position="427"/>
    </location>
</feature>
<feature type="glycosylation site" description="N-linked (GlcNAc...) asparagine" evidence="2">
    <location>
        <position position="446"/>
    </location>
</feature>
<feature type="glycosylation site" description="N-linked (GlcNAc...) asparagine" evidence="2">
    <location>
        <position position="454"/>
    </location>
</feature>
<feature type="disulfide bond" evidence="3">
    <location>
        <begin position="387"/>
        <end position="438"/>
    </location>
</feature>
<feature type="sequence conflict" description="In Ref. 2; BAE24378." evidence="6" ref="2">
    <original>K</original>
    <variation>R</variation>
    <location>
        <position position="574"/>
    </location>
</feature>
<feature type="strand" evidence="9">
    <location>
        <begin position="64"/>
        <end position="66"/>
    </location>
</feature>
<feature type="turn" evidence="8">
    <location>
        <begin position="67"/>
        <end position="69"/>
    </location>
</feature>
<feature type="strand" evidence="9">
    <location>
        <begin position="71"/>
        <end position="73"/>
    </location>
</feature>
<feature type="strand" evidence="9">
    <location>
        <begin position="91"/>
        <end position="94"/>
    </location>
</feature>
<feature type="turn" evidence="8">
    <location>
        <begin position="105"/>
        <end position="110"/>
    </location>
</feature>
<feature type="strand" evidence="9">
    <location>
        <begin position="116"/>
        <end position="118"/>
    </location>
</feature>
<feature type="turn" evidence="9">
    <location>
        <begin position="129"/>
        <end position="132"/>
    </location>
</feature>
<feature type="strand" evidence="9">
    <location>
        <begin position="140"/>
        <end position="142"/>
    </location>
</feature>
<feature type="turn" evidence="9">
    <location>
        <begin position="153"/>
        <end position="155"/>
    </location>
</feature>
<feature type="strand" evidence="9">
    <location>
        <begin position="164"/>
        <end position="166"/>
    </location>
</feature>
<feature type="turn" evidence="9">
    <location>
        <begin position="177"/>
        <end position="182"/>
    </location>
</feature>
<feature type="strand" evidence="9">
    <location>
        <begin position="187"/>
        <end position="190"/>
    </location>
</feature>
<feature type="turn" evidence="9">
    <location>
        <begin position="202"/>
        <end position="207"/>
    </location>
</feature>
<feature type="strand" evidence="9">
    <location>
        <begin position="213"/>
        <end position="215"/>
    </location>
</feature>
<feature type="strand" evidence="9">
    <location>
        <begin position="235"/>
        <end position="237"/>
    </location>
</feature>
<feature type="helix" evidence="9">
    <location>
        <begin position="248"/>
        <end position="251"/>
    </location>
</feature>
<feature type="strand" evidence="9">
    <location>
        <begin position="259"/>
        <end position="261"/>
    </location>
</feature>
<feature type="turn" evidence="8">
    <location>
        <begin position="272"/>
        <end position="277"/>
    </location>
</feature>
<feature type="strand" evidence="9">
    <location>
        <begin position="283"/>
        <end position="285"/>
    </location>
</feature>
<feature type="strand" evidence="9">
    <location>
        <begin position="307"/>
        <end position="309"/>
    </location>
</feature>
<feature type="helix" evidence="9">
    <location>
        <begin position="319"/>
        <end position="321"/>
    </location>
</feature>
<feature type="helix" evidence="9">
    <location>
        <begin position="322"/>
        <end position="331"/>
    </location>
</feature>
<feature type="strand" evidence="9">
    <location>
        <begin position="341"/>
        <end position="345"/>
    </location>
</feature>
<feature type="helix" evidence="9">
    <location>
        <begin position="346"/>
        <end position="348"/>
    </location>
</feature>
<feature type="helix" evidence="9">
    <location>
        <begin position="353"/>
        <end position="355"/>
    </location>
</feature>
<feature type="helix" evidence="9">
    <location>
        <begin position="358"/>
        <end position="360"/>
    </location>
</feature>
<feature type="strand" evidence="9">
    <location>
        <begin position="367"/>
        <end position="370"/>
    </location>
</feature>
<feature type="strand" evidence="9">
    <location>
        <begin position="379"/>
        <end position="381"/>
    </location>
</feature>
<feature type="strand" evidence="9">
    <location>
        <begin position="383"/>
        <end position="385"/>
    </location>
</feature>
<feature type="strand" evidence="9">
    <location>
        <begin position="388"/>
        <end position="399"/>
    </location>
</feature>
<feature type="strand" evidence="9">
    <location>
        <begin position="423"/>
        <end position="427"/>
    </location>
</feature>
<feature type="helix" evidence="9">
    <location>
        <begin position="430"/>
        <end position="432"/>
    </location>
</feature>
<feature type="strand" evidence="9">
    <location>
        <begin position="434"/>
        <end position="441"/>
    </location>
</feature>
<feature type="strand" evidence="9">
    <location>
        <begin position="446"/>
        <end position="453"/>
    </location>
</feature>
<organism>
    <name type="scientific">Mus musculus</name>
    <name type="common">Mouse</name>
    <dbReference type="NCBI Taxonomy" id="10090"/>
    <lineage>
        <taxon>Eukaryota</taxon>
        <taxon>Metazoa</taxon>
        <taxon>Chordata</taxon>
        <taxon>Craniata</taxon>
        <taxon>Vertebrata</taxon>
        <taxon>Euteleostomi</taxon>
        <taxon>Mammalia</taxon>
        <taxon>Eutheria</taxon>
        <taxon>Euarchontoglires</taxon>
        <taxon>Glires</taxon>
        <taxon>Rodentia</taxon>
        <taxon>Myomorpha</taxon>
        <taxon>Muroidea</taxon>
        <taxon>Muridae</taxon>
        <taxon>Murinae</taxon>
        <taxon>Mus</taxon>
        <taxon>Mus</taxon>
    </lineage>
</organism>
<sequence>MAQAHIRGSPCPLLPPGRMSWPHGALLLLWLFSPPLRAGGGGVAVTSAAGGGSPPATSCPAACSCSNQASRVICTRRELAEVPASIPVNTRYLNLQENSIQVIRTDTFKHLRHLEILQLSKNLVRKIEVGAFNGLPSLNTLELFDNRLTTVPTQAFEYLSKLRELWLRNNPIESIPSYAFNRVPSLRRLDLGELKRLEYISEAAFEGLVNLRYLNLGMCNLKDIPNLTALVRLEELELSGNRLDLIRPGSFQGLTSLRKLWLMHAQVATIERNAFDDLKSLEELNLSHNNLMSLPHDLFTPLHRLERVHLNHNPWHCNCDVLWLSWWLKETVPSNTTCCARCHAPAGLKGRYIGELDQSHFTCYAPVIVEPPTDLNVTEGMAAELKCRTGTSMTSVNWLTPNGTLMTHGSYRVRISVLHDGTLNFTNVTVQDTGQYTCMVTNSAGNTTASATLNVSAVDPVAAGGPGGGGPGGGGGAGGAGGYTYFTTVTVETLETQPGEEAQQPRGTEKEPPGPTTDGAWGGGRPDAAAPASASTTAPAPRSSRPTEKAFTVPITDVTENALKDLDDVMKTTKIIIGCFVAITFMAAVMLVAFYKLRKQHQLHKHHGPTRTVEIINVEDELPAASAVSVAAAAAVAGGAGVGGDSHLALPALERDHLNHHHYVAAAFKAHYGGNPGGGCGAKGPGLNSIHEPLLFKSGSKENVQETQI</sequence>
<name>LRC4B_MOUSE</name>
<dbReference type="EMBL" id="BC060263">
    <property type="protein sequence ID" value="AAH60263.1"/>
    <property type="molecule type" value="mRNA"/>
</dbReference>
<dbReference type="EMBL" id="AK140418">
    <property type="protein sequence ID" value="BAE24378.1"/>
    <property type="molecule type" value="mRNA"/>
</dbReference>
<dbReference type="CCDS" id="CCDS21206.1"/>
<dbReference type="RefSeq" id="NP_937893.1">
    <property type="nucleotide sequence ID" value="NM_198250.1"/>
</dbReference>
<dbReference type="PDB" id="3ZYN">
    <property type="method" value="X-ray"/>
    <property type="resolution" value="3.20 A"/>
    <property type="chains" value="A/B=57-365"/>
</dbReference>
<dbReference type="PDB" id="3ZYO">
    <property type="method" value="X-ray"/>
    <property type="resolution" value="3.10 A"/>
    <property type="chains" value="A=57-455"/>
</dbReference>
<dbReference type="PDBsum" id="3ZYN"/>
<dbReference type="PDBsum" id="3ZYO"/>
<dbReference type="SMR" id="P0C192"/>
<dbReference type="BioGRID" id="234868">
    <property type="interactions" value="4"/>
</dbReference>
<dbReference type="FunCoup" id="P0C192">
    <property type="interactions" value="412"/>
</dbReference>
<dbReference type="IntAct" id="P0C192">
    <property type="interactions" value="2"/>
</dbReference>
<dbReference type="MINT" id="P0C192"/>
<dbReference type="STRING" id="10090.ENSMUSP00000053123"/>
<dbReference type="GlyCosmos" id="P0C192">
    <property type="glycosylation" value="9 sites, No reported glycans"/>
</dbReference>
<dbReference type="GlyGen" id="P0C192">
    <property type="glycosylation" value="11 sites, 4 N-linked glycans (4 sites), 1 O-linked glycan (1 site)"/>
</dbReference>
<dbReference type="iPTMnet" id="P0C192"/>
<dbReference type="PhosphoSitePlus" id="P0C192"/>
<dbReference type="PaxDb" id="10090-ENSMUSP00000053123"/>
<dbReference type="PeptideAtlas" id="P0C192"/>
<dbReference type="ProteomicsDB" id="290157"/>
<dbReference type="Antibodypedia" id="53687">
    <property type="antibodies" value="76 antibodies from 18 providers"/>
</dbReference>
<dbReference type="DNASU" id="272381"/>
<dbReference type="Ensembl" id="ENSMUST00000058667.15">
    <property type="protein sequence ID" value="ENSMUSP00000053123.9"/>
    <property type="gene ID" value="ENSMUSG00000047085.15"/>
</dbReference>
<dbReference type="GeneID" id="272381"/>
<dbReference type="KEGG" id="mmu:272381"/>
<dbReference type="UCSC" id="uc009gpj.1">
    <property type="organism name" value="mouse"/>
</dbReference>
<dbReference type="AGR" id="MGI:3027390"/>
<dbReference type="CTD" id="94030"/>
<dbReference type="MGI" id="MGI:3027390">
    <property type="gene designation" value="Lrrc4b"/>
</dbReference>
<dbReference type="VEuPathDB" id="HostDB:ENSMUSG00000047085"/>
<dbReference type="eggNOG" id="KOG0619">
    <property type="taxonomic scope" value="Eukaryota"/>
</dbReference>
<dbReference type="GeneTree" id="ENSGT00940000160261"/>
<dbReference type="HOGENOM" id="CLU_000288_18_24_1"/>
<dbReference type="InParanoid" id="P0C192"/>
<dbReference type="OMA" id="YKAHYNN"/>
<dbReference type="OrthoDB" id="28057at2759"/>
<dbReference type="PhylomeDB" id="P0C192"/>
<dbReference type="TreeFam" id="TF324303"/>
<dbReference type="Reactome" id="R-MMU-388844">
    <property type="pathway name" value="Receptor-type tyrosine-protein phosphatases"/>
</dbReference>
<dbReference type="BioGRID-ORCS" id="272381">
    <property type="hits" value="4 hits in 78 CRISPR screens"/>
</dbReference>
<dbReference type="ChiTaRS" id="Lrrc4b">
    <property type="organism name" value="mouse"/>
</dbReference>
<dbReference type="EvolutionaryTrace" id="P0C192"/>
<dbReference type="PRO" id="PR:P0C192"/>
<dbReference type="Proteomes" id="UP000000589">
    <property type="component" value="Chromosome 7"/>
</dbReference>
<dbReference type="RNAct" id="P0C192">
    <property type="molecule type" value="protein"/>
</dbReference>
<dbReference type="Bgee" id="ENSMUSG00000047085">
    <property type="expression patterns" value="Expressed in embryonic brain and 100 other cell types or tissues"/>
</dbReference>
<dbReference type="ExpressionAtlas" id="P0C192">
    <property type="expression patterns" value="baseline and differential"/>
</dbReference>
<dbReference type="GO" id="GO:0044300">
    <property type="term" value="C:cerebellar mossy fiber"/>
    <property type="evidence" value="ECO:0000314"/>
    <property type="project" value="MGI"/>
</dbReference>
<dbReference type="GO" id="GO:0098978">
    <property type="term" value="C:glutamatergic synapse"/>
    <property type="evidence" value="ECO:0007669"/>
    <property type="project" value="Ensembl"/>
</dbReference>
<dbReference type="GO" id="GO:0098839">
    <property type="term" value="C:postsynaptic density membrane"/>
    <property type="evidence" value="ECO:0007669"/>
    <property type="project" value="Ensembl"/>
</dbReference>
<dbReference type="GO" id="GO:0042734">
    <property type="term" value="C:presynaptic membrane"/>
    <property type="evidence" value="ECO:0007669"/>
    <property type="project" value="UniProtKB-SubCell"/>
</dbReference>
<dbReference type="GO" id="GO:0005102">
    <property type="term" value="F:signaling receptor binding"/>
    <property type="evidence" value="ECO:0000353"/>
    <property type="project" value="BHF-UCL"/>
</dbReference>
<dbReference type="GO" id="GO:0051965">
    <property type="term" value="P:positive regulation of synapse assembly"/>
    <property type="evidence" value="ECO:0000314"/>
    <property type="project" value="BHF-UCL"/>
</dbReference>
<dbReference type="GO" id="GO:0099151">
    <property type="term" value="P:regulation of postsynaptic density assembly"/>
    <property type="evidence" value="ECO:0007669"/>
    <property type="project" value="Ensembl"/>
</dbReference>
<dbReference type="GO" id="GO:1905606">
    <property type="term" value="P:regulation of presynapse assembly"/>
    <property type="evidence" value="ECO:0007669"/>
    <property type="project" value="Ensembl"/>
</dbReference>
<dbReference type="GO" id="GO:0099560">
    <property type="term" value="P:synaptic membrane adhesion"/>
    <property type="evidence" value="ECO:0007669"/>
    <property type="project" value="Ensembl"/>
</dbReference>
<dbReference type="FunFam" id="3.80.10.10:FF:000012">
    <property type="entry name" value="Leucine rich repeat containing 4"/>
    <property type="match status" value="1"/>
</dbReference>
<dbReference type="FunFam" id="2.60.40.10:FF:000076">
    <property type="entry name" value="Leucine-rich repeat and Ig domain-containing 4"/>
    <property type="match status" value="1"/>
</dbReference>
<dbReference type="Gene3D" id="2.60.40.10">
    <property type="entry name" value="Immunoglobulins"/>
    <property type="match status" value="1"/>
</dbReference>
<dbReference type="Gene3D" id="3.80.10.10">
    <property type="entry name" value="Ribonuclease Inhibitor"/>
    <property type="match status" value="1"/>
</dbReference>
<dbReference type="InterPro" id="IPR000483">
    <property type="entry name" value="Cys-rich_flank_reg_C"/>
</dbReference>
<dbReference type="InterPro" id="IPR007110">
    <property type="entry name" value="Ig-like_dom"/>
</dbReference>
<dbReference type="InterPro" id="IPR036179">
    <property type="entry name" value="Ig-like_dom_sf"/>
</dbReference>
<dbReference type="InterPro" id="IPR013783">
    <property type="entry name" value="Ig-like_fold"/>
</dbReference>
<dbReference type="InterPro" id="IPR013098">
    <property type="entry name" value="Ig_I-set"/>
</dbReference>
<dbReference type="InterPro" id="IPR003599">
    <property type="entry name" value="Ig_sub"/>
</dbReference>
<dbReference type="InterPro" id="IPR003598">
    <property type="entry name" value="Ig_sub2"/>
</dbReference>
<dbReference type="InterPro" id="IPR001611">
    <property type="entry name" value="Leu-rich_rpt"/>
</dbReference>
<dbReference type="InterPro" id="IPR003591">
    <property type="entry name" value="Leu-rich_rpt_typical-subtyp"/>
</dbReference>
<dbReference type="InterPro" id="IPR032675">
    <property type="entry name" value="LRR_dom_sf"/>
</dbReference>
<dbReference type="InterPro" id="IPR050541">
    <property type="entry name" value="LRR_TM_domain-containing"/>
</dbReference>
<dbReference type="InterPro" id="IPR000372">
    <property type="entry name" value="LRRNT"/>
</dbReference>
<dbReference type="PANTHER" id="PTHR24369">
    <property type="entry name" value="ANTIGEN BSP, PUTATIVE-RELATED"/>
    <property type="match status" value="1"/>
</dbReference>
<dbReference type="PANTHER" id="PTHR24369:SF102">
    <property type="entry name" value="LEUCINE-RICH REPEAT-CONTAINING PROTEIN 4B"/>
    <property type="match status" value="1"/>
</dbReference>
<dbReference type="Pfam" id="PF07679">
    <property type="entry name" value="I-set"/>
    <property type="match status" value="1"/>
</dbReference>
<dbReference type="Pfam" id="PF00560">
    <property type="entry name" value="LRR_1"/>
    <property type="match status" value="1"/>
</dbReference>
<dbReference type="Pfam" id="PF13855">
    <property type="entry name" value="LRR_8"/>
    <property type="match status" value="3"/>
</dbReference>
<dbReference type="SMART" id="SM00409">
    <property type="entry name" value="IG"/>
    <property type="match status" value="1"/>
</dbReference>
<dbReference type="SMART" id="SM00408">
    <property type="entry name" value="IGc2"/>
    <property type="match status" value="1"/>
</dbReference>
<dbReference type="SMART" id="SM00369">
    <property type="entry name" value="LRR_TYP"/>
    <property type="match status" value="8"/>
</dbReference>
<dbReference type="SMART" id="SM00082">
    <property type="entry name" value="LRRCT"/>
    <property type="match status" value="1"/>
</dbReference>
<dbReference type="SMART" id="SM00013">
    <property type="entry name" value="LRRNT"/>
    <property type="match status" value="1"/>
</dbReference>
<dbReference type="SUPFAM" id="SSF48726">
    <property type="entry name" value="Immunoglobulin"/>
    <property type="match status" value="1"/>
</dbReference>
<dbReference type="SUPFAM" id="SSF52058">
    <property type="entry name" value="L domain-like"/>
    <property type="match status" value="1"/>
</dbReference>
<dbReference type="PROSITE" id="PS50835">
    <property type="entry name" value="IG_LIKE"/>
    <property type="match status" value="1"/>
</dbReference>
<dbReference type="PROSITE" id="PS51450">
    <property type="entry name" value="LRR"/>
    <property type="match status" value="7"/>
</dbReference>
<accession>P0C192</accession>
<proteinExistence type="evidence at protein level"/>
<gene>
    <name type="primary">Lrrc4b</name>
    <name type="synonym">Lrig4</name>
</gene>
<evidence type="ECO:0000250" key="1"/>
<evidence type="ECO:0000255" key="2"/>
<evidence type="ECO:0000255" key="3">
    <source>
        <dbReference type="PROSITE-ProRule" id="PRU00114"/>
    </source>
</evidence>
<evidence type="ECO:0000256" key="4">
    <source>
        <dbReference type="SAM" id="MobiDB-lite"/>
    </source>
</evidence>
<evidence type="ECO:0000269" key="5">
    <source>
    </source>
</evidence>
<evidence type="ECO:0000305" key="6"/>
<evidence type="ECO:0007744" key="7">
    <source>
    </source>
</evidence>
<evidence type="ECO:0007829" key="8">
    <source>
        <dbReference type="PDB" id="3ZYN"/>
    </source>
</evidence>
<evidence type="ECO:0007829" key="9">
    <source>
        <dbReference type="PDB" id="3ZYO"/>
    </source>
</evidence>
<comment type="function">
    <text evidence="1">Synaptic adhesion protein. Regulates the formation of excitatory synapses. The trans-synaptic adhesion between LRRC4B and PTPRF regulates the formation of excitatory synapses in a bidirectional manner (By similarity).</text>
</comment>
<comment type="subunit">
    <text evidence="1 5">Interacts with PTPRF (By similarity). Interacts with DLG4.</text>
</comment>
<comment type="subcellular location">
    <subcellularLocation>
        <location>Membrane</location>
        <topology>Single-pass membrane protein</topology>
    </subcellularLocation>
    <subcellularLocation>
        <location evidence="1">Presynaptic cell membrane</location>
    </subcellularLocation>
</comment>
<comment type="domain">
    <text>The extreme C-terminus binds to the first 2 PDZ domains of DLG4.</text>
</comment>
<comment type="PTM">
    <text evidence="1">N-glycosylated. O-glycosylated; contains sialic acid.</text>
</comment>